<name>SRK2E_ARATH</name>
<gene>
    <name evidence="24" type="primary">SRK2E</name>
    <name evidence="23" type="synonym">OST1</name>
    <name evidence="25" type="synonym">SNRK2.6</name>
    <name evidence="29" type="ordered locus">At4g33950</name>
    <name evidence="30" type="ORF">F17I5.140</name>
</gene>
<comment type="function">
    <text evidence="3 4 5 6 8 9 10 11 12 14 15 16 19 22">Activator of the abscisic acid (ABA) signaling pathway that regulates numerous ABA responses, such as stomata closure in response to drought, darkness, high CO(2), plant pathogens, or decreases in atmospheric relative humidity (RH) (PubMed:30361234). Involved in the resistance to drought by avoiding water loss. Required for the stomata closure mediated by pathogen-associated molecular pattern (PAMPs) (e.g. flg22 and LPS) of pathogenic bacteria such as P.syringae pv. tomato (Pst) and E.coli O157:H7. As a plant defense process, stomata are closed transiently in order to limit invaders, but actively reopened by bacteria after a few hours; virulent strains (e.g. Pst DC3000) are more efficient than avirulent strains (e.g. Pst DC3000 AvrRpt2) in reopening stomata. Mediates the phosphorylation and activation of the S-type anion efflux channel SLAC1, and thus promotes stomata closure. Essential for stomatal closure in response to reactive oxygen species (ROS). Promotes MAPKKK18 activity upon abscisic acid (ABA) treatment (PubMed:26443375).</text>
</comment>
<comment type="catalytic activity">
    <reaction evidence="4 5 15 21 22">
        <text>L-seryl-[protein] + ATP = O-phospho-L-seryl-[protein] + ADP + H(+)</text>
        <dbReference type="Rhea" id="RHEA:17989"/>
        <dbReference type="Rhea" id="RHEA-COMP:9863"/>
        <dbReference type="Rhea" id="RHEA-COMP:11604"/>
        <dbReference type="ChEBI" id="CHEBI:15378"/>
        <dbReference type="ChEBI" id="CHEBI:29999"/>
        <dbReference type="ChEBI" id="CHEBI:30616"/>
        <dbReference type="ChEBI" id="CHEBI:83421"/>
        <dbReference type="ChEBI" id="CHEBI:456216"/>
        <dbReference type="EC" id="2.7.11.1"/>
    </reaction>
</comment>
<comment type="catalytic activity">
    <reaction evidence="4 5 15 21 22">
        <text>L-threonyl-[protein] + ATP = O-phospho-L-threonyl-[protein] + ADP + H(+)</text>
        <dbReference type="Rhea" id="RHEA:46608"/>
        <dbReference type="Rhea" id="RHEA-COMP:11060"/>
        <dbReference type="Rhea" id="RHEA-COMP:11605"/>
        <dbReference type="ChEBI" id="CHEBI:15378"/>
        <dbReference type="ChEBI" id="CHEBI:30013"/>
        <dbReference type="ChEBI" id="CHEBI:30616"/>
        <dbReference type="ChEBI" id="CHEBI:61977"/>
        <dbReference type="ChEBI" id="CHEBI:456216"/>
        <dbReference type="EC" id="2.7.11.1"/>
    </reaction>
</comment>
<comment type="activity regulation">
    <text evidence="4 5 15 17 21">Kinase activity enhanced by ABA and low humidity. Repressed by PP2CA independently of its phosphatase activity. Probably inactivated by ABI1 (PubMed:12468729, PubMed:12514244, PubMed:19955427). Repressed by TOPP1 (PubMed:26943172). Negatively regulated by ABI2 (PubMed:22730405).</text>
</comment>
<comment type="subunit">
    <text evidence="8 13 14 15 17 18 20 21">Interacts with ABI1, PP2CA and SLAC1 (PubMed:16365038, PubMed:19874541, PubMed:19955405, PubMed:19955427). Interacts with B'ALPHA, B'BETA, B'DELTA, PP2AA2, PP2AA3, PP2A1 and PP2A2 (PubMed:26175513). Associates with MAPKKK18 within the nucleus (PubMed:26852793). Interacts with I-2, TOPP1 and TOPP2 (PubMed:26943172). Interacts with ABI2 (PubMed:22730405).</text>
</comment>
<comment type="interaction">
    <interactant intactId="EBI-782514">
        <id>Q940H6</id>
    </interactant>
    <interactant intactId="EBI-1538369">
        <id>Q9M7Q4</id>
        <label>ABF2</label>
    </interactant>
    <organismsDiffer>false</organismsDiffer>
    <experiments>2</experiments>
</comment>
<comment type="interaction">
    <interactant intactId="EBI-782514">
        <id>Q940H6</id>
    </interactant>
    <interactant intactId="EBI-782526">
        <id>P49597</id>
        <label>ABI1</label>
    </interactant>
    <organismsDiffer>false</organismsDiffer>
    <experiments>15</experiments>
</comment>
<comment type="interaction">
    <interactant intactId="EBI-782514">
        <id>Q940H6</id>
    </interactant>
    <interactant intactId="EBI-15803514">
        <id>O04719-1</id>
        <label>ABI2</label>
    </interactant>
    <organismsDiffer>false</organismsDiffer>
    <experiments>5</experiments>
</comment>
<comment type="interaction">
    <interactant intactId="EBI-782514">
        <id>Q940H6</id>
    </interactant>
    <interactant intactId="EBI-25521013">
        <id>Q9FLZ8</id>
        <label>EDL2</label>
    </interactant>
    <organismsDiffer>false</organismsDiffer>
    <experiments>3</experiments>
</comment>
<comment type="interaction">
    <interactant intactId="EBI-782514">
        <id>Q940H6</id>
    </interactant>
    <interactant intactId="EBI-2309302">
        <id>Q9CAJ0</id>
        <label>HAB1</label>
    </interactant>
    <organismsDiffer>false</organismsDiffer>
    <experiments>5</experiments>
</comment>
<comment type="interaction">
    <interactant intactId="EBI-782514">
        <id>Q940H6</id>
    </interactant>
    <interactant intactId="EBI-11174828">
        <id>Q2MHE4</id>
        <label>HT1</label>
    </interactant>
    <organismsDiffer>false</organismsDiffer>
    <experiments>2</experiments>
</comment>
<comment type="interaction">
    <interactant intactId="EBI-782514">
        <id>Q940H6</id>
    </interactant>
    <interactant intactId="EBI-1764934">
        <id>P49598</id>
        <label>PP2CA</label>
    </interactant>
    <organismsDiffer>false</organismsDiffer>
    <experiments>2</experiments>
</comment>
<comment type="interaction">
    <interactant intactId="EBI-782514">
        <id>Q940H6</id>
    </interactant>
    <interactant intactId="EBI-7197253">
        <id>O48538</id>
        <label>RBOHF</label>
    </interactant>
    <organismsDiffer>false</organismsDiffer>
    <experiments>4</experiments>
</comment>
<comment type="interaction">
    <interactant intactId="EBI-782514">
        <id>Q940H6</id>
    </interactant>
    <interactant intactId="EBI-2363373">
        <id>Q9FIF5</id>
        <label>SAG113</label>
    </interactant>
    <organismsDiffer>false</organismsDiffer>
    <experiments>2</experiments>
</comment>
<comment type="interaction">
    <interactant intactId="EBI-782514">
        <id>Q940H6</id>
    </interactant>
    <interactant intactId="EBI-11174918">
        <id>Q9LD83</id>
        <label>SLAC1</label>
    </interactant>
    <organismsDiffer>false</organismsDiffer>
    <experiments>8</experiments>
</comment>
<comment type="interaction">
    <interactant intactId="EBI-782514">
        <id>Q940H6</id>
    </interactant>
    <interactant intactId="EBI-782514">
        <id>Q940H6</id>
        <label>SRK2E</label>
    </interactant>
    <organismsDiffer>false</organismsDiffer>
    <experiments>2</experiments>
</comment>
<comment type="subcellular location">
    <subcellularLocation>
        <location evidence="20">Nucleus</location>
    </subcellularLocation>
</comment>
<comment type="alternative products">
    <event type="alternative splicing"/>
    <isoform>
        <id>Q940H6-1</id>
        <name>1</name>
        <sequence type="displayed"/>
    </isoform>
    <isoform>
        <id>Q940H6-2</id>
        <name>2</name>
        <sequence type="described" ref="VSP_034923"/>
    </isoform>
</comment>
<comment type="tissue specificity">
    <text evidence="4 7 10 12">Expressed in seedlings, leaves, flowers, stems, and roots, but restricted to guard cells and vascular tissue.</text>
</comment>
<comment type="induction">
    <text evidence="7 8">In roots by ABA in an ABI1-dependent manner and by osmotic stress (e.g. sorbitol) in an ABI1-independent manner, but in leaves by low humidity (at protein level). Also induced by salt stress.</text>
</comment>
<comment type="PTM">
    <text evidence="10 22">Autophosphorylation on residues Ser-7, Ser-18, Ser-29, Ser-43, Ser-175 and/or Thr-176 (PubMed:30361234). Only the phosphorylation of Ser-175 is crucial for the kinase activity. The phosphorylation of Ser-43 may repress the ABA signaling pathway in absence of ABA.</text>
</comment>
<comment type="disruption phenotype">
    <text evidence="16 19 22">Impaired ozone-triggered rapid transient decrease (RTD) in stomatal conductance (PubMed:20128877). Impaired induction of MKKK18 activity after 90 minutes of abscisic acid (ABA) treatment (PubMed:26443375). Delayed CO(2)-mediated and darkness-induced and reduced abscisic acid (ABA)-triggered stomatal closure (PubMed:30361234).</text>
</comment>
<comment type="similarity">
    <text evidence="1">Belongs to the protein kinase superfamily. Ser/Thr protein kinase family.</text>
</comment>
<comment type="sequence caution" evidence="26">
    <conflict type="erroneous gene model prediction">
        <sequence resource="EMBL-CDS" id="CAA19877"/>
    </conflict>
</comment>
<comment type="sequence caution" evidence="26">
    <conflict type="erroneous gene model prediction">
        <sequence resource="EMBL-CDS" id="CAB80112"/>
    </conflict>
</comment>
<accession>Q940H6</accession>
<accession>O81763</accession>
<evidence type="ECO:0000255" key="1">
    <source>
        <dbReference type="PROSITE-ProRule" id="PRU00159"/>
    </source>
</evidence>
<evidence type="ECO:0000255" key="2">
    <source>
        <dbReference type="PROSITE-ProRule" id="PRU10027"/>
    </source>
</evidence>
<evidence type="ECO:0000269" key="3">
    <source>
    </source>
</evidence>
<evidence type="ECO:0000269" key="4">
    <source>
    </source>
</evidence>
<evidence type="ECO:0000269" key="5">
    <source>
    </source>
</evidence>
<evidence type="ECO:0000269" key="6">
    <source>
    </source>
</evidence>
<evidence type="ECO:0000269" key="7">
    <source>
    </source>
</evidence>
<evidence type="ECO:0000269" key="8">
    <source>
    </source>
</evidence>
<evidence type="ECO:0000269" key="9">
    <source>
    </source>
</evidence>
<evidence type="ECO:0000269" key="10">
    <source>
    </source>
</evidence>
<evidence type="ECO:0000269" key="11">
    <source>
    </source>
</evidence>
<evidence type="ECO:0000269" key="12">
    <source>
    </source>
</evidence>
<evidence type="ECO:0000269" key="13">
    <source>
    </source>
</evidence>
<evidence type="ECO:0000269" key="14">
    <source>
    </source>
</evidence>
<evidence type="ECO:0000269" key="15">
    <source>
    </source>
</evidence>
<evidence type="ECO:0000269" key="16">
    <source>
    </source>
</evidence>
<evidence type="ECO:0000269" key="17">
    <source>
    </source>
</evidence>
<evidence type="ECO:0000269" key="18">
    <source>
    </source>
</evidence>
<evidence type="ECO:0000269" key="19">
    <source>
    </source>
</evidence>
<evidence type="ECO:0000269" key="20">
    <source>
    </source>
</evidence>
<evidence type="ECO:0000269" key="21">
    <source>
    </source>
</evidence>
<evidence type="ECO:0000269" key="22">
    <source>
    </source>
</evidence>
<evidence type="ECO:0000303" key="23">
    <source>
    </source>
</evidence>
<evidence type="ECO:0000303" key="24">
    <source>
    </source>
</evidence>
<evidence type="ECO:0000303" key="25">
    <source>
    </source>
</evidence>
<evidence type="ECO:0000305" key="26"/>
<evidence type="ECO:0000305" key="27">
    <source>
    </source>
</evidence>
<evidence type="ECO:0000305" key="28">
    <source>
    </source>
</evidence>
<evidence type="ECO:0000312" key="29">
    <source>
        <dbReference type="Araport" id="AT4G33950"/>
    </source>
</evidence>
<evidence type="ECO:0000312" key="30">
    <source>
        <dbReference type="EMBL" id="CAA19877.1"/>
    </source>
</evidence>
<evidence type="ECO:0007829" key="31">
    <source>
        <dbReference type="PDB" id="3UC4"/>
    </source>
</evidence>
<evidence type="ECO:0007829" key="32">
    <source>
        <dbReference type="PDB" id="3UJG"/>
    </source>
</evidence>
<evidence type="ECO:0007829" key="33">
    <source>
        <dbReference type="PDB" id="3ZUT"/>
    </source>
</evidence>
<reference key="1">
    <citation type="journal article" date="2002" name="Plant Cell">
        <title>Arabidopsis OST1 protein kinase mediates the regulation of stomatal aperture by abscisic acid and acts upstream of reactive oxygen species production.</title>
        <authorList>
            <person name="Mustilli A.-C."/>
            <person name="Merlot S."/>
            <person name="Vavasseur A."/>
            <person name="Fenzi F."/>
            <person name="Giraudat J."/>
        </authorList>
    </citation>
    <scope>NUCLEOTIDE SEQUENCE [GENOMIC DNA] (ISOFORM 1)</scope>
    <scope>FUNCTION</scope>
    <scope>MUTAGENESIS OF GLY-33</scope>
    <scope>ACTIVITY REGULATION</scope>
    <scope>TISSUE SPECIFICITY</scope>
    <scope>CATALYTIC ACTIVITY</scope>
    <source>
        <strain>cv. Landsberg erecta</strain>
    </source>
</reference>
<reference key="2">
    <citation type="journal article" date="1999" name="Nature">
        <title>Sequence and analysis of chromosome 4 of the plant Arabidopsis thaliana.</title>
        <authorList>
            <person name="Mayer K.F.X."/>
            <person name="Schueller C."/>
            <person name="Wambutt R."/>
            <person name="Murphy G."/>
            <person name="Volckaert G."/>
            <person name="Pohl T."/>
            <person name="Duesterhoeft A."/>
            <person name="Stiekema W."/>
            <person name="Entian K.-D."/>
            <person name="Terryn N."/>
            <person name="Harris B."/>
            <person name="Ansorge W."/>
            <person name="Brandt P."/>
            <person name="Grivell L.A."/>
            <person name="Rieger M."/>
            <person name="Weichselgartner M."/>
            <person name="de Simone V."/>
            <person name="Obermaier B."/>
            <person name="Mache R."/>
            <person name="Mueller M."/>
            <person name="Kreis M."/>
            <person name="Delseny M."/>
            <person name="Puigdomenech P."/>
            <person name="Watson M."/>
            <person name="Schmidtheini T."/>
            <person name="Reichert B."/>
            <person name="Portetelle D."/>
            <person name="Perez-Alonso M."/>
            <person name="Boutry M."/>
            <person name="Bancroft I."/>
            <person name="Vos P."/>
            <person name="Hoheisel J."/>
            <person name="Zimmermann W."/>
            <person name="Wedler H."/>
            <person name="Ridley P."/>
            <person name="Langham S.-A."/>
            <person name="McCullagh B."/>
            <person name="Bilham L."/>
            <person name="Robben J."/>
            <person name="van der Schueren J."/>
            <person name="Grymonprez B."/>
            <person name="Chuang Y.-J."/>
            <person name="Vandenbussche F."/>
            <person name="Braeken M."/>
            <person name="Weltjens I."/>
            <person name="Voet M."/>
            <person name="Bastiaens I."/>
            <person name="Aert R."/>
            <person name="Defoor E."/>
            <person name="Weitzenegger T."/>
            <person name="Bothe G."/>
            <person name="Ramsperger U."/>
            <person name="Hilbert H."/>
            <person name="Braun M."/>
            <person name="Holzer E."/>
            <person name="Brandt A."/>
            <person name="Peters S."/>
            <person name="van Staveren M."/>
            <person name="Dirkse W."/>
            <person name="Mooijman P."/>
            <person name="Klein Lankhorst R."/>
            <person name="Rose M."/>
            <person name="Hauf J."/>
            <person name="Koetter P."/>
            <person name="Berneiser S."/>
            <person name="Hempel S."/>
            <person name="Feldpausch M."/>
            <person name="Lamberth S."/>
            <person name="Van den Daele H."/>
            <person name="De Keyser A."/>
            <person name="Buysshaert C."/>
            <person name="Gielen J."/>
            <person name="Villarroel R."/>
            <person name="De Clercq R."/>
            <person name="van Montagu M."/>
            <person name="Rogers J."/>
            <person name="Cronin A."/>
            <person name="Quail M.A."/>
            <person name="Bray-Allen S."/>
            <person name="Clark L."/>
            <person name="Doggett J."/>
            <person name="Hall S."/>
            <person name="Kay M."/>
            <person name="Lennard N."/>
            <person name="McLay K."/>
            <person name="Mayes R."/>
            <person name="Pettett A."/>
            <person name="Rajandream M.A."/>
            <person name="Lyne M."/>
            <person name="Benes V."/>
            <person name="Rechmann S."/>
            <person name="Borkova D."/>
            <person name="Bloecker H."/>
            <person name="Scharfe M."/>
            <person name="Grimm M."/>
            <person name="Loehnert T.-H."/>
            <person name="Dose S."/>
            <person name="de Haan M."/>
            <person name="Maarse A.C."/>
            <person name="Schaefer M."/>
            <person name="Mueller-Auer S."/>
            <person name="Gabel C."/>
            <person name="Fuchs M."/>
            <person name="Fartmann B."/>
            <person name="Granderath K."/>
            <person name="Dauner D."/>
            <person name="Herzl A."/>
            <person name="Neumann S."/>
            <person name="Argiriou A."/>
            <person name="Vitale D."/>
            <person name="Liguori R."/>
            <person name="Piravandi E."/>
            <person name="Massenet O."/>
            <person name="Quigley F."/>
            <person name="Clabauld G."/>
            <person name="Muendlein A."/>
            <person name="Felber R."/>
            <person name="Schnabl S."/>
            <person name="Hiller R."/>
            <person name="Schmidt W."/>
            <person name="Lecharny A."/>
            <person name="Aubourg S."/>
            <person name="Chefdor F."/>
            <person name="Cooke R."/>
            <person name="Berger C."/>
            <person name="Monfort A."/>
            <person name="Casacuberta E."/>
            <person name="Gibbons T."/>
            <person name="Weber N."/>
            <person name="Vandenbol M."/>
            <person name="Bargues M."/>
            <person name="Terol J."/>
            <person name="Torres A."/>
            <person name="Perez-Perez A."/>
            <person name="Purnelle B."/>
            <person name="Bent E."/>
            <person name="Johnson S."/>
            <person name="Tacon D."/>
            <person name="Jesse T."/>
            <person name="Heijnen L."/>
            <person name="Schwarz S."/>
            <person name="Scholler P."/>
            <person name="Heber S."/>
            <person name="Francs P."/>
            <person name="Bielke C."/>
            <person name="Frishman D."/>
            <person name="Haase D."/>
            <person name="Lemcke K."/>
            <person name="Mewes H.-W."/>
            <person name="Stocker S."/>
            <person name="Zaccaria P."/>
            <person name="Bevan M."/>
            <person name="Wilson R.K."/>
            <person name="de la Bastide M."/>
            <person name="Habermann K."/>
            <person name="Parnell L."/>
            <person name="Dedhia N."/>
            <person name="Gnoj L."/>
            <person name="Schutz K."/>
            <person name="Huang E."/>
            <person name="Spiegel L."/>
            <person name="Sekhon M."/>
            <person name="Murray J."/>
            <person name="Sheet P."/>
            <person name="Cordes M."/>
            <person name="Abu-Threideh J."/>
            <person name="Stoneking T."/>
            <person name="Kalicki J."/>
            <person name="Graves T."/>
            <person name="Harmon G."/>
            <person name="Edwards J."/>
            <person name="Latreille P."/>
            <person name="Courtney L."/>
            <person name="Cloud J."/>
            <person name="Abbott A."/>
            <person name="Scott K."/>
            <person name="Johnson D."/>
            <person name="Minx P."/>
            <person name="Bentley D."/>
            <person name="Fulton B."/>
            <person name="Miller N."/>
            <person name="Greco T."/>
            <person name="Kemp K."/>
            <person name="Kramer J."/>
            <person name="Fulton L."/>
            <person name="Mardis E."/>
            <person name="Dante M."/>
            <person name="Pepin K."/>
            <person name="Hillier L.W."/>
            <person name="Nelson J."/>
            <person name="Spieth J."/>
            <person name="Ryan E."/>
            <person name="Andrews S."/>
            <person name="Geisel C."/>
            <person name="Layman D."/>
            <person name="Du H."/>
            <person name="Ali J."/>
            <person name="Berghoff A."/>
            <person name="Jones K."/>
            <person name="Drone K."/>
            <person name="Cotton M."/>
            <person name="Joshu C."/>
            <person name="Antonoiu B."/>
            <person name="Zidanic M."/>
            <person name="Strong C."/>
            <person name="Sun H."/>
            <person name="Lamar B."/>
            <person name="Yordan C."/>
            <person name="Ma P."/>
            <person name="Zhong J."/>
            <person name="Preston R."/>
            <person name="Vil D."/>
            <person name="Shekher M."/>
            <person name="Matero A."/>
            <person name="Shah R."/>
            <person name="Swaby I.K."/>
            <person name="O'Shaughnessy A."/>
            <person name="Rodriguez M."/>
            <person name="Hoffman J."/>
            <person name="Till S."/>
            <person name="Granat S."/>
            <person name="Shohdy N."/>
            <person name="Hasegawa A."/>
            <person name="Hameed A."/>
            <person name="Lodhi M."/>
            <person name="Johnson A."/>
            <person name="Chen E."/>
            <person name="Marra M.A."/>
            <person name="Martienssen R."/>
            <person name="McCombie W.R."/>
        </authorList>
    </citation>
    <scope>NUCLEOTIDE SEQUENCE [LARGE SCALE GENOMIC DNA]</scope>
    <source>
        <strain>cv. Columbia</strain>
    </source>
</reference>
<reference key="3">
    <citation type="journal article" date="2017" name="Plant J.">
        <title>Araport11: a complete reannotation of the Arabidopsis thaliana reference genome.</title>
        <authorList>
            <person name="Cheng C.Y."/>
            <person name="Krishnakumar V."/>
            <person name="Chan A.P."/>
            <person name="Thibaud-Nissen F."/>
            <person name="Schobel S."/>
            <person name="Town C.D."/>
        </authorList>
    </citation>
    <scope>GENOME REANNOTATION</scope>
    <source>
        <strain>cv. Columbia</strain>
    </source>
</reference>
<reference key="4">
    <citation type="journal article" date="2003" name="Science">
        <title>Empirical analysis of transcriptional activity in the Arabidopsis genome.</title>
        <authorList>
            <person name="Yamada K."/>
            <person name="Lim J."/>
            <person name="Dale J.M."/>
            <person name="Chen H."/>
            <person name="Shinn P."/>
            <person name="Palm C.J."/>
            <person name="Southwick A.M."/>
            <person name="Wu H.C."/>
            <person name="Kim C.J."/>
            <person name="Nguyen M."/>
            <person name="Pham P.K."/>
            <person name="Cheuk R.F."/>
            <person name="Karlin-Newmann G."/>
            <person name="Liu S.X."/>
            <person name="Lam B."/>
            <person name="Sakano H."/>
            <person name="Wu T."/>
            <person name="Yu G."/>
            <person name="Miranda M."/>
            <person name="Quach H.L."/>
            <person name="Tripp M."/>
            <person name="Chang C.H."/>
            <person name="Lee J.M."/>
            <person name="Toriumi M.J."/>
            <person name="Chan M.M."/>
            <person name="Tang C.C."/>
            <person name="Onodera C.S."/>
            <person name="Deng J.M."/>
            <person name="Akiyama K."/>
            <person name="Ansari Y."/>
            <person name="Arakawa T."/>
            <person name="Banh J."/>
            <person name="Banno F."/>
            <person name="Bowser L."/>
            <person name="Brooks S.Y."/>
            <person name="Carninci P."/>
            <person name="Chao Q."/>
            <person name="Choy N."/>
            <person name="Enju A."/>
            <person name="Goldsmith A.D."/>
            <person name="Gurjal M."/>
            <person name="Hansen N.F."/>
            <person name="Hayashizaki Y."/>
            <person name="Johnson-Hopson C."/>
            <person name="Hsuan V.W."/>
            <person name="Iida K."/>
            <person name="Karnes M."/>
            <person name="Khan S."/>
            <person name="Koesema E."/>
            <person name="Ishida J."/>
            <person name="Jiang P.X."/>
            <person name="Jones T."/>
            <person name="Kawai J."/>
            <person name="Kamiya A."/>
            <person name="Meyers C."/>
            <person name="Nakajima M."/>
            <person name="Narusaka M."/>
            <person name="Seki M."/>
            <person name="Sakurai T."/>
            <person name="Satou M."/>
            <person name="Tamse R."/>
            <person name="Vaysberg M."/>
            <person name="Wallender E.K."/>
            <person name="Wong C."/>
            <person name="Yamamura Y."/>
            <person name="Yuan S."/>
            <person name="Shinozaki K."/>
            <person name="Davis R.W."/>
            <person name="Theologis A."/>
            <person name="Ecker J.R."/>
        </authorList>
    </citation>
    <scope>NUCLEOTIDE SEQUENCE [LARGE SCALE MRNA] (ISOFORM 1)</scope>
    <source>
        <strain>cv. Columbia</strain>
    </source>
</reference>
<reference key="5">
    <citation type="journal article" date="2002" name="Plant Cell Physiol.">
        <title>ABA-activated SnRK2 protein kinase is required for dehydration stress signaling in Arabidopsis.</title>
        <authorList>
            <person name="Yoshida R."/>
            <person name="Hobo T."/>
            <person name="Ichimura K."/>
            <person name="Mizoguchi T."/>
            <person name="Takahashi F."/>
            <person name="Aronso J."/>
            <person name="Ecker J.R."/>
            <person name="Shinozaki K."/>
        </authorList>
    </citation>
    <scope>FUNCTION</scope>
    <scope>ACTIVITY REGULATION</scope>
    <scope>CATALYTIC ACTIVITY</scope>
</reference>
<reference key="6">
    <citation type="journal article" date="2002" name="Plant J.">
        <title>Use of infrared thermal imaging to isolate Arabidopsis mutants defective in stomatal regulation.</title>
        <authorList>
            <person name="Merlot S."/>
            <person name="Mustilli A.-C."/>
            <person name="Genty B."/>
            <person name="North H."/>
            <person name="Lefebvre V."/>
            <person name="Sotta B."/>
            <person name="Vavasseur A."/>
            <person name="Giraudat J."/>
        </authorList>
    </citation>
    <scope>FUNCTION</scope>
    <scope>MUTAGENESIS OF GLY-33</scope>
</reference>
<reference key="7">
    <citation type="journal article" date="2003" name="Plant Physiol.">
        <title>The Arabidopsis CDPK-SnRK superfamily of protein kinases.</title>
        <authorList>
            <person name="Hrabak E.M."/>
            <person name="Chan C.W.M."/>
            <person name="Gribskov M."/>
            <person name="Harper J.F."/>
            <person name="Choi J.H."/>
            <person name="Halford N."/>
            <person name="Kudla J."/>
            <person name="Luan S."/>
            <person name="Nimmo H.G."/>
            <person name="Sussman M.R."/>
            <person name="Thomas M."/>
            <person name="Walker-Simmons K."/>
            <person name="Zhu J.-K."/>
            <person name="Harmon A.C."/>
        </authorList>
    </citation>
    <scope>GENE FAMILY</scope>
    <scope>NOMENCLATURE</scope>
</reference>
<reference key="8">
    <citation type="journal article" date="2003" name="Trends Plant Sci.">
        <title>OPEN STOMATA1 opens the door to ABA signaling in Arabidopsis guard cells.</title>
        <authorList>
            <person name="Assmann S.M."/>
        </authorList>
    </citation>
    <scope>REVIEW</scope>
</reference>
<reference key="9">
    <citation type="journal article" date="2004" name="J. Biol. Chem.">
        <title>Identification of nine sucrose nonfermenting 1-related protein kinases 2 activated by hyperosmotic and saline stresses in Arabidopsis thaliana.</title>
        <authorList>
            <person name="Boudsocq M."/>
            <person name="Barbier-Brygoo H."/>
            <person name="Lauriere C."/>
        </authorList>
    </citation>
    <scope>TISSUE SPECIFICITY</scope>
    <scope>INDUCTION</scope>
</reference>
<reference key="10">
    <citation type="journal article" date="2004" name="Plant Physiol.">
        <title>Cytoplasmic alkalization precedes reactive oxygen species production during methyl jasmonate- and abscisic acid-induced stomatal closure.</title>
        <authorList>
            <person name="Suhita D."/>
            <person name="Raghavendra A.S."/>
            <person name="Kwak J.M."/>
            <person name="Vavasseur A."/>
        </authorList>
    </citation>
    <scope>FUNCTION</scope>
</reference>
<reference key="11">
    <citation type="journal article" date="2006" name="Cell">
        <title>Plant stomata function in innate immunity against bacterial invasion.</title>
        <authorList>
            <person name="Melotto M."/>
            <person name="Underwood W."/>
            <person name="Koczan J."/>
            <person name="Nomura K."/>
            <person name="He S.Y."/>
        </authorList>
    </citation>
    <scope>FUNCTION</scope>
</reference>
<reference key="12">
    <citation type="journal article" date="2006" name="Curr. Biol.">
        <title>The identification of genes involved in the stomatal response to reduced atmospheric relative humidity.</title>
        <authorList>
            <person name="Xie X."/>
            <person name="Wang Y."/>
            <person name="Williamson L."/>
            <person name="Holroyd G.H."/>
            <person name="Tagliavia C."/>
            <person name="Murchie E."/>
            <person name="Theobald J."/>
            <person name="Knight M.R."/>
            <person name="Davies W.J."/>
            <person name="Leyser H.M.O."/>
            <person name="Hetherington A.M."/>
        </authorList>
    </citation>
    <scope>FUNCTION</scope>
    <scope>MUTAGENESIS OF GLY-178</scope>
</reference>
<reference key="13">
    <citation type="journal article" date="2006" name="J. Biol. Chem.">
        <title>The regulatory domain of SRK2E/OST1/SnRK2.6 interacts with ABI1 and integrates abscisic acid (ABA) and osmotic stress signals controlling stomatal closure in Arabidopsis.</title>
        <authorList>
            <person name="Yoshida R."/>
            <person name="Umezawa T."/>
            <person name="Mizoguchi T."/>
            <person name="Takahashi S."/>
            <person name="Takahashi F."/>
            <person name="Shinozaki K."/>
        </authorList>
    </citation>
    <scope>FUNCTION</scope>
    <scope>MUTAGENESIS OF 1-MET--LEU-12; 283-ALA--MET-362 AND 319-PRO--MET-362</scope>
    <scope>GENE FAMILY</scope>
    <scope>INTERACTION WITH ABI1</scope>
    <scope>INDUCTION</scope>
</reference>
<reference key="14">
    <citation type="journal article" date="2006" name="Plant Physiol.">
        <title>Identification of features regulating OST1 kinase activity and OST1 function in guard cells.</title>
        <authorList>
            <person name="Belin C."/>
            <person name="de Franco P.-O."/>
            <person name="Bourbousse C."/>
            <person name="Chaignepain S."/>
            <person name="Schmitter J.-M."/>
            <person name="Vavasseur A."/>
            <person name="Giraudat J."/>
            <person name="Barbier-Brygoo H."/>
            <person name="Thomine S."/>
        </authorList>
    </citation>
    <scope>FUNCTION</scope>
    <scope>MUTAGENESIS OF SER-7; SER-18; SER-29; GLY-33; SER-43; SER-175; THR-176; 280-ASN--MET-362; 302-GLY--MET-362; 320-ALA--MET-362; 331-GLY--MET-362 AND 348-ASP--MET-362</scope>
    <scope>PHOSPHORYLATION AT SER-7; SER-18; SER-29; SER-43 AND SER-175</scope>
    <scope>TISSUE SPECIFICITY</scope>
    <scope>IDENTIFICATION BY MASS SPECTROMETRY</scope>
</reference>
<reference key="15">
    <citation type="journal article" date="2007" name="Plant Cell">
        <title>Identification of two protein kinases required for abscisic acid regulation of seed germination, root growth, and gene expression in Arabidopsis.</title>
        <authorList>
            <person name="Fujii H."/>
            <person name="Verslues P.E."/>
            <person name="Zhu J.-K."/>
        </authorList>
    </citation>
    <scope>FUNCTION</scope>
    <scope>TISSUE SPECIFICITY</scope>
</reference>
<reference key="16">
    <citation type="journal article" date="2010" name="Plant J.">
        <title>PYR/PYL/RCAR family members are major in-vivo ABI1 protein phosphatase 2C-interacting proteins in Arabidopsis.</title>
        <authorList>
            <person name="Nishimura N."/>
            <person name="Sarkeshik A."/>
            <person name="Nito K."/>
            <person name="Park S.-Y."/>
            <person name="Wang A."/>
            <person name="Carvalho P.C."/>
            <person name="Lee S."/>
            <person name="Caddell D.F."/>
            <person name="Cutler S.R."/>
            <person name="Chory J."/>
            <person name="Yates J.R."/>
            <person name="Schroeder J.I."/>
        </authorList>
    </citation>
    <scope>INTERACTION WITH ABI1</scope>
</reference>
<reference key="17">
    <citation type="journal article" date="2009" name="Proc. Natl. Acad. Sci. U.S.A.">
        <title>A protein kinase-phosphatase pair interacts with an ion channel to regulate ABA signaling in plant guard cells.</title>
        <authorList>
            <person name="Lee S.C."/>
            <person name="Lan W."/>
            <person name="Buchanan B.B."/>
            <person name="Luan S."/>
        </authorList>
    </citation>
    <scope>FUNCTION</scope>
    <scope>AUTOPHOSPHORYLATION</scope>
    <scope>INTERACTION WITH SLAC1 AND PP2CA</scope>
    <scope>ACTIVITY REGULATION</scope>
    <scope>MUTAGENESIS OF LYS-50</scope>
    <scope>CATALYTIC ACTIVITY</scope>
</reference>
<reference key="18">
    <citation type="journal article" date="2009" name="Proc. Natl. Acad. Sci. U.S.A.">
        <title>Activity of guard cell anion channel SLAC1 is controlled by drought-stress signaling kinase-phosphatase pair.</title>
        <authorList>
            <person name="Geiger D."/>
            <person name="Scherzer S."/>
            <person name="Mumm P."/>
            <person name="Stange A."/>
            <person name="Marten I."/>
            <person name="Bauer H."/>
            <person name="Ache P."/>
            <person name="Matschi S."/>
            <person name="Liese A."/>
            <person name="Al-Rasheid K.A.S."/>
            <person name="Romeis T."/>
            <person name="Hedrich R."/>
        </authorList>
    </citation>
    <scope>FUNCTION</scope>
    <scope>INTERACTION WITH ABI1</scope>
    <scope>MUTAGENESIS OF ASP-140</scope>
</reference>
<reference key="19">
    <citation type="journal article" date="2010" name="Plant J.">
        <title>Ozone-triggered rapid stomatal response involves the production of reactive oxygen species, and is controlled by SLAC1 and OST1.</title>
        <authorList>
            <person name="Vahisalu T."/>
            <person name="Puzorjova I."/>
            <person name="Brosche M."/>
            <person name="Valk E."/>
            <person name="Lepiku M."/>
            <person name="Moldau H."/>
            <person name="Pechter P."/>
            <person name="Wang Y.-S."/>
            <person name="Lindgren O."/>
            <person name="Salojaervi J."/>
            <person name="Loog M."/>
            <person name="Kangasjaervi J."/>
            <person name="Kollist H."/>
        </authorList>
    </citation>
    <scope>FUNCTION</scope>
    <scope>DISRUPTION PHENOTYPE</scope>
    <scope>AUTOPHOSPHORYLATION</scope>
    <source>
        <strain>cv. Columbia</strain>
    </source>
</reference>
<reference key="20">
    <citation type="journal article" date="2012" name="Plant Cell">
        <title>A plasma membrane receptor kinase, GHR1, mediates abscisic acid- and hydrogen peroxide-regulated stomatal movement in Arabidopsis.</title>
        <authorList>
            <person name="Hua D."/>
            <person name="Wang C."/>
            <person name="He J."/>
            <person name="Liao H."/>
            <person name="Duan Y."/>
            <person name="Zhu Z."/>
            <person name="Guo Y."/>
            <person name="Chen Z."/>
            <person name="Gong Z."/>
        </authorList>
    </citation>
    <scope>INTERACTION WITH ABI2</scope>
    <scope>ACTIVITY REGULATION</scope>
</reference>
<reference key="21">
    <citation type="journal article" date="2015" name="Plant Cell Physiol.">
        <title>Arabidopsis ABA-activated kinase MAPKKK18 is regulated by protein phosphatase 2C ABI1 and the ubiquitin-proteasome pathway.</title>
        <authorList>
            <person name="Mitula F."/>
            <person name="Tajdel M."/>
            <person name="Ciesla A."/>
            <person name="Kasprowicz-Maluski A."/>
            <person name="Kulik A."/>
            <person name="Babula-Skowronska D."/>
            <person name="Michalak M."/>
            <person name="Dobrowolska G."/>
            <person name="Sadowski J."/>
            <person name="Ludwikow A."/>
        </authorList>
    </citation>
    <scope>FUNCTION</scope>
    <scope>DISRUPTION PHENOTYPE</scope>
    <source>
        <strain>cv. Columbia</strain>
    </source>
</reference>
<reference key="22">
    <citation type="journal article" date="2015" name="Plant Physiol.">
        <title>Identification of Open Stomata1-interacting proteins reveals interactions with sucrose non-fermenting1-related protein kinases2 and with type 2a protein phosphatases that function in abscisic acid responses.</title>
        <authorList>
            <person name="Waadt R."/>
            <person name="Manalansan B."/>
            <person name="Rauniyar N."/>
            <person name="Munemasa S."/>
            <person name="Booker M.A."/>
            <person name="Brandt B."/>
            <person name="Waadt C."/>
            <person name="Nusinow D.A."/>
            <person name="Kay S.A."/>
            <person name="Kunz H.H."/>
            <person name="Schumacher K."/>
            <person name="DeLong A."/>
            <person name="Yates J.R. III"/>
            <person name="Schroeder J.I."/>
        </authorList>
    </citation>
    <scope>INTERACTION WITH B'ALPHA; B'BETA; B'DELTA; PP2AA2; PP2AA3; PP2A1 AND PP2A2</scope>
</reference>
<reference key="23">
    <citation type="journal article" date="2016" name="Plant Signal. Behav.">
        <title>Regulation of Arabidopsis MAPKKK18 by ABI1 and SnRK2, components of the ABA signaling pathway.</title>
        <authorList>
            <person name="Tajdel M."/>
            <person name="Mitula F."/>
            <person name="Ludwikow A."/>
        </authorList>
    </citation>
    <scope>INTERACTION WITH MAPKKK18</scope>
    <scope>SUBCELLULAR LOCATION</scope>
</reference>
<reference key="24">
    <citation type="journal article" date="2016" name="PLoS Genet.">
        <title>Type one protein phosphatase 1 and its regulatory protein inhibitor 2 negatively regulate ABA signaling.</title>
        <authorList>
            <person name="Hou Y.J."/>
            <person name="Zhu Y."/>
            <person name="Wang P."/>
            <person name="Zhao Y."/>
            <person name="Xie S."/>
            <person name="Batelli G."/>
            <person name="Wang B."/>
            <person name="Duan C.G."/>
            <person name="Wang X."/>
            <person name="Xing L."/>
            <person name="Lei M."/>
            <person name="Yan J."/>
            <person name="Zhu X."/>
            <person name="Zhu J.K."/>
        </authorList>
    </citation>
    <scope>ACTIVITY REGULATION</scope>
    <scope>INTERACTION WITH I-2; TOPP1 AND TOPP2</scope>
    <scope>CATALYTIC ACTIVITY</scope>
</reference>
<reference key="25">
    <citation type="journal article" date="2018" name="Plant Cell">
        <title>The receptor-like pseudokinase GHR1 is required for stomatal closure.</title>
        <authorList>
            <person name="Sierla M."/>
            <person name="Horak H."/>
            <person name="Overmyer K."/>
            <person name="Waszczak C."/>
            <person name="Yarmolinsky D."/>
            <person name="Maierhofer T."/>
            <person name="Vainonen J.P."/>
            <person name="Denessiouk K."/>
            <person name="Salojaervi J."/>
            <person name="Laanemets K."/>
            <person name="Toldsepp K."/>
            <person name="Vahisalu T."/>
            <person name="Gauthier A."/>
            <person name="Puukko T."/>
            <person name="Paulin L."/>
            <person name="Auvinen P."/>
            <person name="Geiger D."/>
            <person name="Hedrich R."/>
            <person name="Kollist H."/>
            <person name="Kangasjaervi J."/>
        </authorList>
    </citation>
    <scope>FUNCTION</scope>
    <scope>DISRUPTION PHENOTYPE</scope>
    <scope>CATALYTIC ACTIVITY</scope>
    <scope>AUTOPHOSPHORYLATION</scope>
    <source>
        <strain>cv. Columbia</strain>
        <strain>cv. Columbia GL1</strain>
    </source>
</reference>
<reference key="26">
    <citation type="journal article" date="2011" name="J. Mol. Biol.">
        <title>The structure of Arabidopsis thaliana OST1 provides insights into the kinase regulation mechanism in response to osmotic stress.</title>
        <authorList>
            <person name="Yunta C."/>
            <person name="Martinez-Ripoll M."/>
            <person name="Zhu J.K."/>
            <person name="Albert A."/>
        </authorList>
    </citation>
    <scope>X-RAY CRYSTALLOGRAPHY (2.50 ANGSTROMS)</scope>
</reference>
<reference key="27">
    <citation type="journal article" date="2011" name="Proc. Natl. Acad. Sci. U.S.A.">
        <title>Structural basis for basal activity and autoactivation of abscisic acid (ABA) signaling SnRK2 kinases.</title>
        <authorList>
            <person name="Ng L.M."/>
            <person name="Soon F.F."/>
            <person name="Zhou X.E."/>
            <person name="West G.M."/>
            <person name="Kovach A."/>
            <person name="Suino-Powell K.M."/>
            <person name="Chalmers M.J."/>
            <person name="Li J."/>
            <person name="Yong E.L."/>
            <person name="Zhu J.K."/>
            <person name="Griffin P.R."/>
            <person name="Melcher K."/>
            <person name="Xu H.E."/>
        </authorList>
    </citation>
    <scope>X-RAY CRYSTALLOGRAPHY (2.30 ANGSTROMS)</scope>
</reference>
<reference key="28">
    <citation type="journal article" date="2012" name="Science">
        <title>Molecular mimicry regulates ABA signaling by SnRK2 kinases and PP2C phosphatases.</title>
        <authorList>
            <person name="Soon F.F."/>
            <person name="Ng L.M."/>
            <person name="Zhou X.E."/>
            <person name="West G.M."/>
            <person name="Kovach A."/>
            <person name="Tan M.H."/>
            <person name="Suino-Powell K.M."/>
            <person name="He Y."/>
            <person name="Xu Y."/>
            <person name="Chalmers M.J."/>
            <person name="Brunzelle J.S."/>
            <person name="Zhang H."/>
            <person name="Yang H."/>
            <person name="Jiang H."/>
            <person name="Li J."/>
            <person name="Yong E.L."/>
            <person name="Cutler S."/>
            <person name="Zhu J.K."/>
            <person name="Griffin P.R."/>
            <person name="Melcher K."/>
            <person name="Xu H.E."/>
        </authorList>
    </citation>
    <scope>X-RAY CRYSTALLOGRAPHY (2.60 ANGSTROMS) OF 11-362</scope>
</reference>
<organism>
    <name type="scientific">Arabidopsis thaliana</name>
    <name type="common">Mouse-ear cress</name>
    <dbReference type="NCBI Taxonomy" id="3702"/>
    <lineage>
        <taxon>Eukaryota</taxon>
        <taxon>Viridiplantae</taxon>
        <taxon>Streptophyta</taxon>
        <taxon>Embryophyta</taxon>
        <taxon>Tracheophyta</taxon>
        <taxon>Spermatophyta</taxon>
        <taxon>Magnoliopsida</taxon>
        <taxon>eudicotyledons</taxon>
        <taxon>Gunneridae</taxon>
        <taxon>Pentapetalae</taxon>
        <taxon>rosids</taxon>
        <taxon>malvids</taxon>
        <taxon>Brassicales</taxon>
        <taxon>Brassicaceae</taxon>
        <taxon>Camelineae</taxon>
        <taxon>Arabidopsis</taxon>
    </lineage>
</organism>
<keyword id="KW-0002">3D-structure</keyword>
<keyword id="KW-0938">Abscisic acid signaling pathway</keyword>
<keyword id="KW-0025">Alternative splicing</keyword>
<keyword id="KW-0067">ATP-binding</keyword>
<keyword id="KW-0418">Kinase</keyword>
<keyword id="KW-0547">Nucleotide-binding</keyword>
<keyword id="KW-0539">Nucleus</keyword>
<keyword id="KW-0597">Phosphoprotein</keyword>
<keyword id="KW-0611">Plant defense</keyword>
<keyword id="KW-1185">Reference proteome</keyword>
<keyword id="KW-0723">Serine/threonine-protein kinase</keyword>
<keyword id="KW-0808">Transferase</keyword>
<protein>
    <recommendedName>
        <fullName evidence="24">Serine/threonine-protein kinase SRK2E</fullName>
        <ecNumber evidence="4 5 15 21 22">2.7.11.1</ecNumber>
    </recommendedName>
    <alternativeName>
        <fullName evidence="23">Protein OPEN STOMATA 1</fullName>
    </alternativeName>
    <alternativeName>
        <fullName evidence="25">SNF1-related kinase 2.6</fullName>
        <shortName evidence="25">SnRK2.6</shortName>
    </alternativeName>
    <alternativeName>
        <fullName evidence="23">Serine/threonine-protein kinase OST1</fullName>
    </alternativeName>
</protein>
<feature type="chain" id="PRO_0000345160" description="Serine/threonine-protein kinase SRK2E">
    <location>
        <begin position="1"/>
        <end position="362"/>
    </location>
</feature>
<feature type="domain" description="Protein kinase" evidence="1">
    <location>
        <begin position="21"/>
        <end position="277"/>
    </location>
</feature>
<feature type="region of interest" description="Activation loop" evidence="28">
    <location>
        <begin position="160"/>
        <end position="186"/>
    </location>
</feature>
<feature type="region of interest" description="Domain I; osmotic stress response, required for the kinase activity" evidence="27">
    <location>
        <begin position="283"/>
        <end position="318"/>
    </location>
</feature>
<feature type="region of interest" description="Domain II; ABA response and ABI1 binding" evidence="27">
    <location>
        <begin position="319"/>
        <end position="362"/>
    </location>
</feature>
<feature type="active site" description="Proton acceptor" evidence="1 2">
    <location>
        <position position="140"/>
    </location>
</feature>
<feature type="binding site" evidence="1">
    <location>
        <begin position="27"/>
        <end position="35"/>
    </location>
    <ligand>
        <name>ATP</name>
        <dbReference type="ChEBI" id="CHEBI:30616"/>
    </ligand>
</feature>
<feature type="binding site" evidence="1">
    <location>
        <position position="50"/>
    </location>
    <ligand>
        <name>ATP</name>
        <dbReference type="ChEBI" id="CHEBI:30616"/>
    </ligand>
</feature>
<feature type="modified residue" description="Phosphoserine; by autocatalysis" evidence="10">
    <location>
        <position position="7"/>
    </location>
</feature>
<feature type="modified residue" description="Phosphoserine; by autocatalysis" evidence="10">
    <location>
        <position position="18"/>
    </location>
</feature>
<feature type="modified residue" description="Phosphoserine; by autocatalysis" evidence="10">
    <location>
        <position position="29"/>
    </location>
</feature>
<feature type="modified residue" description="Phosphoserine; by autocatalysis" evidence="10">
    <location>
        <position position="43"/>
    </location>
</feature>
<feature type="modified residue" description="Phosphoserine" evidence="10">
    <location>
        <position position="175"/>
    </location>
</feature>
<feature type="splice variant" id="VSP_034923" description="In isoform 2." evidence="26">
    <original>DIGSGNFGVARLMRDKQSNELVAVKYIERGEK</original>
    <variation>MVGLFVFVQ</variation>
    <location>
        <begin position="26"/>
        <end position="57"/>
    </location>
</feature>
<feature type="mutagenesis site" description="Reduced kinase activity in response to ABA and osmotic stress." evidence="8">
    <location>
        <begin position="1"/>
        <end position="12"/>
    </location>
</feature>
<feature type="mutagenesis site" description="Normal kinase activity, but loss of ABA signaling pathway positive regulation." evidence="10">
    <original>S</original>
    <variation>A</variation>
    <variation>D</variation>
    <location>
        <position position="7"/>
    </location>
</feature>
<feature type="mutagenesis site" description="Normal kinase activity, but loss of ABA signaling pathway positive regulation." evidence="10">
    <original>S</original>
    <variation>A</variation>
    <variation>D</variation>
    <location>
        <position position="18"/>
    </location>
</feature>
<feature type="mutagenesis site" description="Normal kinase activity, but loss of ABA signaling pathway positive regulation." evidence="10">
    <original>S</original>
    <variation>A</variation>
    <variation>D</variation>
    <location>
        <position position="29"/>
    </location>
</feature>
<feature type="mutagenesis site" description="In ost1-2; loss of kinase activity, and insensitivity to ABA during the stomatal aperture regulation." evidence="3 4 10">
    <original>G</original>
    <variation>R</variation>
    <location>
        <position position="33"/>
    </location>
</feature>
<feature type="mutagenesis site" description="Normal kinase activity, but constitutive ABA signaling pathway activation." evidence="10">
    <original>S</original>
    <variation>A</variation>
    <variation>D</variation>
    <location>
        <position position="43"/>
    </location>
</feature>
<feature type="mutagenesis site" description="Loss of kinase activity." evidence="15">
    <original>K</original>
    <variation>N</variation>
    <location>
        <position position="50"/>
    </location>
</feature>
<feature type="mutagenesis site" description="Loss of kinase activity." evidence="14">
    <original>D</original>
    <variation>A</variation>
    <location>
        <position position="140"/>
    </location>
</feature>
<feature type="mutagenesis site" description="Loss of kinase activity, and loss of ABA signaling pathway positive regulation." evidence="10">
    <original>S</original>
    <variation>A</variation>
    <variation>D</variation>
    <location>
        <position position="175"/>
    </location>
</feature>
<feature type="mutagenesis site" description="Normal kinase activity, and normal regulation of the ABA signaling pathway." evidence="10">
    <original>T</original>
    <variation>A</variation>
    <location>
        <position position="176"/>
    </location>
</feature>
<feature type="mutagenesis site" description="Reduced kinase activity, but normal regulation of the ABA signaling pathway." evidence="10">
    <original>T</original>
    <variation>D</variation>
    <location>
        <position position="176"/>
    </location>
</feature>
<feature type="mutagenesis site" description="In ost1-4; no stomatal closure when RH decreases, and insensitivity to ABA." evidence="9">
    <original>G</original>
    <variation>Q</variation>
    <location>
        <position position="178"/>
    </location>
</feature>
<feature type="mutagenesis site" description="Loss of kinase activity, and loss of ABA signaling pathway positive regulation." evidence="10">
    <location>
        <begin position="280"/>
        <end position="362"/>
    </location>
</feature>
<feature type="mutagenesis site" description="Loss of kinase activity in response to ABA and osmotic stress." evidence="8">
    <location>
        <begin position="283"/>
        <end position="362"/>
    </location>
</feature>
<feature type="mutagenesis site" description="Loss of kinase activity, and loss of ABA signaling pathway positive regulation." evidence="10">
    <location>
        <begin position="302"/>
        <end position="362"/>
    </location>
</feature>
<feature type="mutagenesis site" description="Loss of kinase activity specifically in response to ABA, and impaired interaction with ABI1." evidence="8">
    <location>
        <begin position="319"/>
        <end position="362"/>
    </location>
</feature>
<feature type="mutagenesis site" description="Normal kinase activity, but loss of ABA signaling pathway positive regulation." evidence="10">
    <location>
        <begin position="320"/>
        <end position="362"/>
    </location>
</feature>
<feature type="mutagenesis site" description="Normal kinase activity, but loss of ABA signaling pathway positive regulation." evidence="10">
    <location>
        <begin position="331"/>
        <end position="362"/>
    </location>
</feature>
<feature type="mutagenesis site" description="Normal kinase activity, and normal regulation of the ABA signaling pathway." evidence="10">
    <location>
        <begin position="348"/>
        <end position="362"/>
    </location>
</feature>
<feature type="turn" evidence="31">
    <location>
        <begin position="18"/>
        <end position="20"/>
    </location>
</feature>
<feature type="strand" evidence="31">
    <location>
        <begin position="21"/>
        <end position="27"/>
    </location>
</feature>
<feature type="strand" evidence="32">
    <location>
        <begin position="30"/>
        <end position="32"/>
    </location>
</feature>
<feature type="strand" evidence="31">
    <location>
        <begin position="34"/>
        <end position="40"/>
    </location>
</feature>
<feature type="turn" evidence="31">
    <location>
        <begin position="41"/>
        <end position="43"/>
    </location>
</feature>
<feature type="strand" evidence="31">
    <location>
        <begin position="46"/>
        <end position="53"/>
    </location>
</feature>
<feature type="turn" evidence="31">
    <location>
        <begin position="54"/>
        <end position="56"/>
    </location>
</feature>
<feature type="helix" evidence="31">
    <location>
        <begin position="60"/>
        <end position="70"/>
    </location>
</feature>
<feature type="strand" evidence="31">
    <location>
        <begin position="80"/>
        <end position="85"/>
    </location>
</feature>
<feature type="strand" evidence="31">
    <location>
        <begin position="87"/>
        <end position="95"/>
    </location>
</feature>
<feature type="helix" evidence="31">
    <location>
        <begin position="102"/>
        <end position="109"/>
    </location>
</feature>
<feature type="helix" evidence="31">
    <location>
        <begin position="114"/>
        <end position="134"/>
    </location>
</feature>
<feature type="helix" evidence="33">
    <location>
        <begin position="138"/>
        <end position="140"/>
    </location>
</feature>
<feature type="helix" evidence="31">
    <location>
        <begin position="143"/>
        <end position="145"/>
    </location>
</feature>
<feature type="strand" evidence="32">
    <location>
        <begin position="147"/>
        <end position="149"/>
    </location>
</feature>
<feature type="strand" evidence="31">
    <location>
        <begin position="150"/>
        <end position="153"/>
    </location>
</feature>
<feature type="strand" evidence="31">
    <location>
        <begin position="156"/>
        <end position="158"/>
    </location>
</feature>
<feature type="helix" evidence="32">
    <location>
        <begin position="161"/>
        <end position="163"/>
    </location>
</feature>
<feature type="helix" evidence="31">
    <location>
        <begin position="180"/>
        <end position="182"/>
    </location>
</feature>
<feature type="helix" evidence="31">
    <location>
        <begin position="185"/>
        <end position="189"/>
    </location>
</feature>
<feature type="helix" evidence="31">
    <location>
        <begin position="195"/>
        <end position="212"/>
    </location>
</feature>
<feature type="strand" evidence="31">
    <location>
        <begin position="216"/>
        <end position="218"/>
    </location>
</feature>
<feature type="strand" evidence="31">
    <location>
        <begin position="220"/>
        <end position="222"/>
    </location>
</feature>
<feature type="helix" evidence="31">
    <location>
        <begin position="226"/>
        <end position="234"/>
    </location>
</feature>
<feature type="helix" evidence="31">
    <location>
        <begin position="248"/>
        <end position="257"/>
    </location>
</feature>
<feature type="helix" evidence="31">
    <location>
        <begin position="262"/>
        <end position="264"/>
    </location>
</feature>
<feature type="helix" evidence="31">
    <location>
        <begin position="268"/>
        <end position="272"/>
    </location>
</feature>
<feature type="helix" evidence="31">
    <location>
        <begin position="275"/>
        <end position="278"/>
    </location>
</feature>
<feature type="helix" evidence="32">
    <location>
        <begin position="291"/>
        <end position="296"/>
    </location>
</feature>
<feature type="helix" evidence="31">
    <location>
        <begin position="297"/>
        <end position="299"/>
    </location>
</feature>
<feature type="helix" evidence="31">
    <location>
        <begin position="305"/>
        <end position="314"/>
    </location>
</feature>
<sequence>MDRPAVSGPMDLPIMHDSDRYELVKDIGSGNFGVARLMRDKQSNELVAVKYIERGEKIDENVKREIINHRSLRHPNIVRFKEVILTPTHLAIVMEYASGGELFERICNAGRFSEDEARFFFQQLISGVSYCHAMQVCHRDLKLENTLLDGSPAPRLKICDFGYSKSSVLHSQPKSTVGTPAYIAPEVLLKKEYDGKVADVWSCGVTLYVMLVGAYPFEDPEEPKNFRKTIHRILNVQYAIPDYVHISPECRHLISRIFVADPAKRISIPEIRNHEWFLKNLPADLMNDNTMTTQFDESDQPGQSIEEIMQIIAEATVPPAGTQNLNHYLTGSLDIDDDMEEDLESDLDDLDIDSSGEIVYAM</sequence>
<proteinExistence type="evidence at protein level"/>
<dbReference type="EC" id="2.7.11.1" evidence="4 5 15 21 22"/>
<dbReference type="EMBL" id="AJ316009">
    <property type="protein sequence ID" value="CAC87047.1"/>
    <property type="molecule type" value="Genomic_DNA"/>
</dbReference>
<dbReference type="EMBL" id="AL031032">
    <property type="protein sequence ID" value="CAA19877.1"/>
    <property type="status" value="ALT_SEQ"/>
    <property type="molecule type" value="Genomic_DNA"/>
</dbReference>
<dbReference type="EMBL" id="AL161584">
    <property type="protein sequence ID" value="CAB80112.1"/>
    <property type="status" value="ALT_SEQ"/>
    <property type="molecule type" value="Genomic_DNA"/>
</dbReference>
<dbReference type="EMBL" id="CP002687">
    <property type="protein sequence ID" value="AEE86299.1"/>
    <property type="molecule type" value="Genomic_DNA"/>
</dbReference>
<dbReference type="EMBL" id="AY054624">
    <property type="protein sequence ID" value="AAK96815.1"/>
    <property type="molecule type" value="mRNA"/>
</dbReference>
<dbReference type="EMBL" id="AY081538">
    <property type="protein sequence ID" value="AAM10100.1"/>
    <property type="molecule type" value="mRNA"/>
</dbReference>
<dbReference type="PIR" id="T05223">
    <property type="entry name" value="T05223"/>
</dbReference>
<dbReference type="RefSeq" id="NP_567945.1">
    <molecule id="Q940H6-1"/>
    <property type="nucleotide sequence ID" value="NM_119556.3"/>
</dbReference>
<dbReference type="PDB" id="3UC4">
    <property type="method" value="X-ray"/>
    <property type="resolution" value="2.30 A"/>
    <property type="chains" value="A/B=1-362"/>
</dbReference>
<dbReference type="PDB" id="3UDB">
    <property type="method" value="X-ray"/>
    <property type="resolution" value="2.57 A"/>
    <property type="chains" value="A/B/C/D/E/F=1-317"/>
</dbReference>
<dbReference type="PDB" id="3UJG">
    <property type="method" value="X-ray"/>
    <property type="resolution" value="2.60 A"/>
    <property type="chains" value="A=11-362"/>
</dbReference>
<dbReference type="PDB" id="3ZUT">
    <property type="method" value="X-ray"/>
    <property type="resolution" value="2.50 A"/>
    <property type="chains" value="A/B=1-362"/>
</dbReference>
<dbReference type="PDB" id="3ZUU">
    <property type="method" value="X-ray"/>
    <property type="resolution" value="2.70 A"/>
    <property type="chains" value="A/B=1-362"/>
</dbReference>
<dbReference type="PDBsum" id="3UC4"/>
<dbReference type="PDBsum" id="3UDB"/>
<dbReference type="PDBsum" id="3UJG"/>
<dbReference type="PDBsum" id="3ZUT"/>
<dbReference type="PDBsum" id="3ZUU"/>
<dbReference type="SMR" id="Q940H6"/>
<dbReference type="BioGRID" id="14823">
    <property type="interactions" value="52"/>
</dbReference>
<dbReference type="DIP" id="DIP-36705N"/>
<dbReference type="FunCoup" id="Q940H6">
    <property type="interactions" value="1771"/>
</dbReference>
<dbReference type="IntAct" id="Q940H6">
    <property type="interactions" value="14"/>
</dbReference>
<dbReference type="MINT" id="Q940H6"/>
<dbReference type="STRING" id="3702.Q940H6"/>
<dbReference type="iPTMnet" id="Q940H6"/>
<dbReference type="PaxDb" id="3702-AT4G33950.1"/>
<dbReference type="EnsemblPlants" id="AT4G33950.1">
    <molecule id="Q940H6-1"/>
    <property type="protein sequence ID" value="AT4G33950.1"/>
    <property type="gene ID" value="AT4G33950"/>
</dbReference>
<dbReference type="GeneID" id="829541"/>
<dbReference type="Gramene" id="AT4G33950.1">
    <molecule id="Q940H6-1"/>
    <property type="protein sequence ID" value="AT4G33950.1"/>
    <property type="gene ID" value="AT4G33950"/>
</dbReference>
<dbReference type="KEGG" id="ath:AT4G33950"/>
<dbReference type="Araport" id="AT4G33950"/>
<dbReference type="TAIR" id="AT4G33950">
    <property type="gene designation" value="OST1"/>
</dbReference>
<dbReference type="eggNOG" id="KOG0583">
    <property type="taxonomic scope" value="Eukaryota"/>
</dbReference>
<dbReference type="InParanoid" id="Q940H6"/>
<dbReference type="OrthoDB" id="193931at2759"/>
<dbReference type="PhylomeDB" id="Q940H6"/>
<dbReference type="EvolutionaryTrace" id="Q940H6"/>
<dbReference type="PRO" id="PR:Q940H6"/>
<dbReference type="Proteomes" id="UP000006548">
    <property type="component" value="Chromosome 4"/>
</dbReference>
<dbReference type="ExpressionAtlas" id="Q940H6">
    <property type="expression patterns" value="baseline and differential"/>
</dbReference>
<dbReference type="GO" id="GO:0005737">
    <property type="term" value="C:cytoplasm"/>
    <property type="evidence" value="ECO:0000314"/>
    <property type="project" value="TAIR"/>
</dbReference>
<dbReference type="GO" id="GO:0005634">
    <property type="term" value="C:nucleus"/>
    <property type="evidence" value="ECO:0000314"/>
    <property type="project" value="UniProtKB"/>
</dbReference>
<dbReference type="GO" id="GO:0005886">
    <property type="term" value="C:plasma membrane"/>
    <property type="evidence" value="ECO:0007005"/>
    <property type="project" value="TAIR"/>
</dbReference>
<dbReference type="GO" id="GO:0005524">
    <property type="term" value="F:ATP binding"/>
    <property type="evidence" value="ECO:0007669"/>
    <property type="project" value="UniProtKB-KW"/>
</dbReference>
<dbReference type="GO" id="GO:0009931">
    <property type="term" value="F:calcium-dependent protein serine/threonine kinase activity"/>
    <property type="evidence" value="ECO:0000250"/>
    <property type="project" value="TAIR"/>
</dbReference>
<dbReference type="GO" id="GO:0042802">
    <property type="term" value="F:identical protein binding"/>
    <property type="evidence" value="ECO:0000353"/>
    <property type="project" value="IntAct"/>
</dbReference>
<dbReference type="GO" id="GO:0016301">
    <property type="term" value="F:kinase activity"/>
    <property type="evidence" value="ECO:0000314"/>
    <property type="project" value="TAIR"/>
</dbReference>
<dbReference type="GO" id="GO:0004672">
    <property type="term" value="F:protein kinase activity"/>
    <property type="evidence" value="ECO:0000314"/>
    <property type="project" value="TAIR"/>
</dbReference>
<dbReference type="GO" id="GO:0019903">
    <property type="term" value="F:protein phosphatase binding"/>
    <property type="evidence" value="ECO:0000353"/>
    <property type="project" value="UniProtKB"/>
</dbReference>
<dbReference type="GO" id="GO:0106310">
    <property type="term" value="F:protein serine kinase activity"/>
    <property type="evidence" value="ECO:0007669"/>
    <property type="project" value="RHEA"/>
</dbReference>
<dbReference type="GO" id="GO:0009738">
    <property type="term" value="P:abscisic acid-activated signaling pathway"/>
    <property type="evidence" value="ECO:0000304"/>
    <property type="project" value="TAIR"/>
</dbReference>
<dbReference type="GO" id="GO:0071485">
    <property type="term" value="P:cellular response to absence of light"/>
    <property type="evidence" value="ECO:0000315"/>
    <property type="project" value="UniProtKB"/>
</dbReference>
<dbReference type="GO" id="GO:0071244">
    <property type="term" value="P:cellular response to carbon dioxide"/>
    <property type="evidence" value="ECO:0000315"/>
    <property type="project" value="UniProtKB"/>
</dbReference>
<dbReference type="GO" id="GO:0042742">
    <property type="term" value="P:defense response to bacterium"/>
    <property type="evidence" value="ECO:0000315"/>
    <property type="project" value="TAIR"/>
</dbReference>
<dbReference type="GO" id="GO:0048366">
    <property type="term" value="P:leaf development"/>
    <property type="evidence" value="ECO:0000315"/>
    <property type="project" value="TAIR"/>
</dbReference>
<dbReference type="GO" id="GO:0009789">
    <property type="term" value="P:positive regulation of abscisic acid-activated signaling pathway"/>
    <property type="evidence" value="ECO:0000315"/>
    <property type="project" value="UniProtKB"/>
</dbReference>
<dbReference type="GO" id="GO:0046777">
    <property type="term" value="P:protein autophosphorylation"/>
    <property type="evidence" value="ECO:0000314"/>
    <property type="project" value="CACAO"/>
</dbReference>
<dbReference type="GO" id="GO:0010359">
    <property type="term" value="P:regulation of anion channel activity"/>
    <property type="evidence" value="ECO:0000314"/>
    <property type="project" value="UniProtKB"/>
</dbReference>
<dbReference type="GO" id="GO:2000377">
    <property type="term" value="P:regulation of reactive oxygen species metabolic process"/>
    <property type="evidence" value="ECO:0000315"/>
    <property type="project" value="TAIR"/>
</dbReference>
<dbReference type="GO" id="GO:0090333">
    <property type="term" value="P:regulation of stomatal closure"/>
    <property type="evidence" value="ECO:0000315"/>
    <property type="project" value="UniProtKB"/>
</dbReference>
<dbReference type="GO" id="GO:0010119">
    <property type="term" value="P:regulation of stomatal movement"/>
    <property type="evidence" value="ECO:0000315"/>
    <property type="project" value="TAIR"/>
</dbReference>
<dbReference type="GO" id="GO:1902456">
    <property type="term" value="P:regulation of stomatal opening"/>
    <property type="evidence" value="ECO:0000315"/>
    <property type="project" value="TAIR"/>
</dbReference>
<dbReference type="GO" id="GO:0009737">
    <property type="term" value="P:response to abscisic acid"/>
    <property type="evidence" value="ECO:0000314"/>
    <property type="project" value="TAIR"/>
</dbReference>
<dbReference type="GO" id="GO:0006970">
    <property type="term" value="P:response to osmotic stress"/>
    <property type="evidence" value="ECO:0000314"/>
    <property type="project" value="TAIR"/>
</dbReference>
<dbReference type="GO" id="GO:0009651">
    <property type="term" value="P:response to salt stress"/>
    <property type="evidence" value="ECO:0000314"/>
    <property type="project" value="TAIR"/>
</dbReference>
<dbReference type="GO" id="GO:0009414">
    <property type="term" value="P:response to water deprivation"/>
    <property type="evidence" value="ECO:0000315"/>
    <property type="project" value="TAIR"/>
</dbReference>
<dbReference type="GO" id="GO:0010118">
    <property type="term" value="P:stomatal movement"/>
    <property type="evidence" value="ECO:0000315"/>
    <property type="project" value="TAIR"/>
</dbReference>
<dbReference type="GO" id="GO:0005985">
    <property type="term" value="P:sucrose metabolic process"/>
    <property type="evidence" value="ECO:0000315"/>
    <property type="project" value="TAIR"/>
</dbReference>
<dbReference type="GO" id="GO:0019432">
    <property type="term" value="P:triglyceride biosynthetic process"/>
    <property type="evidence" value="ECO:0000315"/>
    <property type="project" value="TAIR"/>
</dbReference>
<dbReference type="GO" id="GO:0006636">
    <property type="term" value="P:unsaturated fatty acid biosynthetic process"/>
    <property type="evidence" value="ECO:0000315"/>
    <property type="project" value="TAIR"/>
</dbReference>
<dbReference type="CDD" id="cd14665">
    <property type="entry name" value="STKc_SnRK2-3"/>
    <property type="match status" value="1"/>
</dbReference>
<dbReference type="FunFam" id="1.10.510.10:FF:000085">
    <property type="entry name" value="Serine/threonine-protein kinase SRK2E"/>
    <property type="match status" value="1"/>
</dbReference>
<dbReference type="FunFam" id="3.30.200.20:FF:000045">
    <property type="entry name" value="Serine/threonine-protein kinase SRK2E"/>
    <property type="match status" value="1"/>
</dbReference>
<dbReference type="Gene3D" id="3.30.200.20">
    <property type="entry name" value="Phosphorylase Kinase, domain 1"/>
    <property type="match status" value="1"/>
</dbReference>
<dbReference type="Gene3D" id="1.10.510.10">
    <property type="entry name" value="Transferase(Phosphotransferase) domain 1"/>
    <property type="match status" value="1"/>
</dbReference>
<dbReference type="InterPro" id="IPR011009">
    <property type="entry name" value="Kinase-like_dom_sf"/>
</dbReference>
<dbReference type="InterPro" id="IPR000719">
    <property type="entry name" value="Prot_kinase_dom"/>
</dbReference>
<dbReference type="InterPro" id="IPR017441">
    <property type="entry name" value="Protein_kinase_ATP_BS"/>
</dbReference>
<dbReference type="InterPro" id="IPR008271">
    <property type="entry name" value="Ser/Thr_kinase_AS"/>
</dbReference>
<dbReference type="PANTHER" id="PTHR24343">
    <property type="entry name" value="SERINE/THREONINE KINASE"/>
    <property type="match status" value="1"/>
</dbReference>
<dbReference type="PANTHER" id="PTHR24343:SF509">
    <property type="entry name" value="SERINE_THREONINE-PROTEIN KINASE SRK2E"/>
    <property type="match status" value="1"/>
</dbReference>
<dbReference type="Pfam" id="PF00069">
    <property type="entry name" value="Pkinase"/>
    <property type="match status" value="1"/>
</dbReference>
<dbReference type="SMART" id="SM00220">
    <property type="entry name" value="S_TKc"/>
    <property type="match status" value="1"/>
</dbReference>
<dbReference type="SUPFAM" id="SSF56112">
    <property type="entry name" value="Protein kinase-like (PK-like)"/>
    <property type="match status" value="1"/>
</dbReference>
<dbReference type="PROSITE" id="PS00107">
    <property type="entry name" value="PROTEIN_KINASE_ATP"/>
    <property type="match status" value="1"/>
</dbReference>
<dbReference type="PROSITE" id="PS50011">
    <property type="entry name" value="PROTEIN_KINASE_DOM"/>
    <property type="match status" value="1"/>
</dbReference>
<dbReference type="PROSITE" id="PS00108">
    <property type="entry name" value="PROTEIN_KINASE_ST"/>
    <property type="match status" value="1"/>
</dbReference>